<dbReference type="EMBL" id="AF492759">
    <property type="protein sequence ID" value="AAM70188.1"/>
    <property type="molecule type" value="mRNA"/>
</dbReference>
<dbReference type="EMBL" id="AB073175">
    <property type="protein sequence ID" value="BAB88387.1"/>
    <property type="molecule type" value="mRNA"/>
</dbReference>
<dbReference type="EMBL" id="AL022140">
    <property type="protein sequence ID" value="CAA18101.1"/>
    <property type="status" value="ALT_SEQ"/>
    <property type="molecule type" value="Genomic_DNA"/>
</dbReference>
<dbReference type="EMBL" id="AL161556">
    <property type="protein sequence ID" value="CAB79153.1"/>
    <property type="status" value="ALT_SEQ"/>
    <property type="molecule type" value="Genomic_DNA"/>
</dbReference>
<dbReference type="EMBL" id="CP002687">
    <property type="protein sequence ID" value="AEE84537.1"/>
    <property type="molecule type" value="Genomic_DNA"/>
</dbReference>
<dbReference type="EMBL" id="BT002024">
    <property type="protein sequence ID" value="AAN72035.1"/>
    <property type="molecule type" value="mRNA"/>
</dbReference>
<dbReference type="EMBL" id="BT006522">
    <property type="protein sequence ID" value="AAP21330.1"/>
    <property type="molecule type" value="mRNA"/>
</dbReference>
<dbReference type="EMBL" id="AY085349">
    <property type="protein sequence ID" value="AAM62580.1"/>
    <property type="molecule type" value="mRNA"/>
</dbReference>
<dbReference type="PIR" id="T49105">
    <property type="entry name" value="T49105"/>
</dbReference>
<dbReference type="RefSeq" id="NP_567642.1">
    <molecule id="Q8LEM4-1"/>
    <property type="nucleotide sequence ID" value="NM_118319.4"/>
</dbReference>
<dbReference type="BMRB" id="Q8LEM4"/>
<dbReference type="SMR" id="Q8LEM4"/>
<dbReference type="BioGRID" id="13576">
    <property type="interactions" value="5"/>
</dbReference>
<dbReference type="FunCoup" id="Q8LEM4">
    <property type="interactions" value="2784"/>
</dbReference>
<dbReference type="STRING" id="3702.Q8LEM4"/>
<dbReference type="PaxDb" id="3702-AT4G21980.2"/>
<dbReference type="EnsemblPlants" id="AT4G21980.1">
    <molecule id="Q8LEM4-1"/>
    <property type="protein sequence ID" value="AT4G21980.1"/>
    <property type="gene ID" value="AT4G21980"/>
</dbReference>
<dbReference type="GeneID" id="828287"/>
<dbReference type="Gramene" id="AT4G21980.1">
    <molecule id="Q8LEM4-1"/>
    <property type="protein sequence ID" value="AT4G21980.1"/>
    <property type="gene ID" value="AT4G21980"/>
</dbReference>
<dbReference type="KEGG" id="ath:AT4G21980"/>
<dbReference type="Araport" id="AT4G21980"/>
<dbReference type="TAIR" id="AT4G21980">
    <property type="gene designation" value="APG8A"/>
</dbReference>
<dbReference type="eggNOG" id="KOG1654">
    <property type="taxonomic scope" value="Eukaryota"/>
</dbReference>
<dbReference type="HOGENOM" id="CLU_119276_0_1_1"/>
<dbReference type="InParanoid" id="Q8LEM4"/>
<dbReference type="OrthoDB" id="6738456at2759"/>
<dbReference type="PhylomeDB" id="Q8LEM4"/>
<dbReference type="PRO" id="PR:Q8LEM4"/>
<dbReference type="Proteomes" id="UP000006548">
    <property type="component" value="Chromosome 4"/>
</dbReference>
<dbReference type="ExpressionAtlas" id="Q8LEM4">
    <property type="expression patterns" value="baseline and differential"/>
</dbReference>
<dbReference type="GO" id="GO:0000421">
    <property type="term" value="C:autophagosome membrane"/>
    <property type="evidence" value="ECO:0007669"/>
    <property type="project" value="UniProtKB-SubCell"/>
</dbReference>
<dbReference type="GO" id="GO:0031410">
    <property type="term" value="C:cytoplasmic vesicle"/>
    <property type="evidence" value="ECO:0007669"/>
    <property type="project" value="UniProtKB-KW"/>
</dbReference>
<dbReference type="GO" id="GO:0005874">
    <property type="term" value="C:microtubule"/>
    <property type="evidence" value="ECO:0007669"/>
    <property type="project" value="UniProtKB-KW"/>
</dbReference>
<dbReference type="GO" id="GO:0006914">
    <property type="term" value="P:autophagy"/>
    <property type="evidence" value="ECO:0007669"/>
    <property type="project" value="UniProtKB-KW"/>
</dbReference>
<dbReference type="GO" id="GO:0015031">
    <property type="term" value="P:protein transport"/>
    <property type="evidence" value="ECO:0007669"/>
    <property type="project" value="UniProtKB-KW"/>
</dbReference>
<dbReference type="CDD" id="cd16128">
    <property type="entry name" value="Ubl_ATG8"/>
    <property type="match status" value="1"/>
</dbReference>
<dbReference type="FunFam" id="3.10.20.90:FF:000010">
    <property type="entry name" value="Autophagy-related protein"/>
    <property type="match status" value="1"/>
</dbReference>
<dbReference type="Gene3D" id="3.10.20.90">
    <property type="entry name" value="Phosphatidylinositol 3-kinase Catalytic Subunit, Chain A, domain 1"/>
    <property type="match status" value="1"/>
</dbReference>
<dbReference type="InterPro" id="IPR004241">
    <property type="entry name" value="Atg8-like"/>
</dbReference>
<dbReference type="InterPro" id="IPR029071">
    <property type="entry name" value="Ubiquitin-like_domsf"/>
</dbReference>
<dbReference type="PANTHER" id="PTHR10969">
    <property type="entry name" value="MICROTUBULE-ASSOCIATED PROTEINS 1A/1B LIGHT CHAIN 3-RELATED"/>
    <property type="match status" value="1"/>
</dbReference>
<dbReference type="Pfam" id="PF02991">
    <property type="entry name" value="ATG8"/>
    <property type="match status" value="1"/>
</dbReference>
<dbReference type="SUPFAM" id="SSF54236">
    <property type="entry name" value="Ubiquitin-like"/>
    <property type="match status" value="1"/>
</dbReference>
<gene>
    <name type="primary">ATG8A</name>
    <name type="synonym">APG8A</name>
    <name type="ordered locus">At4g21980</name>
    <name type="ORF">F1N20.80</name>
</gene>
<sequence length="122" mass="13695">MAKSSFKISNPLEARMSESSRIREKYPDRIPVIVEKAGQSDVPDIDKKKYLVPADLTVGQFVYVVRKRIKLGAEKAIFVFVKNTLPPTAALMSAIYEEHKDEDGFLYMTYSGENTFGSLTVA</sequence>
<reference key="1">
    <citation type="journal article" date="2002" name="J. Biol. Chem.">
        <title>The APG8/12-activating enzyme APG7 is required for proper nutrient recycling and senescence in Arabidopsis thaliana.</title>
        <authorList>
            <person name="Doelling J.H."/>
            <person name="Walker J.M."/>
            <person name="Friedman E.M."/>
            <person name="Thompson A.R."/>
            <person name="Vierstra R.D."/>
        </authorList>
    </citation>
    <scope>NUCLEOTIDE SEQUENCE [MRNA]</scope>
    <source>
        <strain>cv. Columbia</strain>
    </source>
</reference>
<reference key="2">
    <citation type="journal article" date="2002" name="Plant Physiol.">
        <title>Leaf senescence and starvation-induced chlorosis are accelerated by the disruption of an Arabidopsis autophagy gene.</title>
        <authorList>
            <person name="Hanaoka H."/>
            <person name="Noda T."/>
            <person name="Shirano Y."/>
            <person name="Kato T."/>
            <person name="Hayashi H."/>
            <person name="Shibata D."/>
            <person name="Tabata S."/>
            <person name="Ohsumi Y."/>
        </authorList>
    </citation>
    <scope>NUCLEOTIDE SEQUENCE [MRNA]</scope>
    <scope>NOMENCLATURE</scope>
    <scope>GENE FAMILY</scope>
</reference>
<reference key="3">
    <citation type="journal article" date="1999" name="Nature">
        <title>Sequence and analysis of chromosome 4 of the plant Arabidopsis thaliana.</title>
        <authorList>
            <person name="Mayer K.F.X."/>
            <person name="Schueller C."/>
            <person name="Wambutt R."/>
            <person name="Murphy G."/>
            <person name="Volckaert G."/>
            <person name="Pohl T."/>
            <person name="Duesterhoeft A."/>
            <person name="Stiekema W."/>
            <person name="Entian K.-D."/>
            <person name="Terryn N."/>
            <person name="Harris B."/>
            <person name="Ansorge W."/>
            <person name="Brandt P."/>
            <person name="Grivell L.A."/>
            <person name="Rieger M."/>
            <person name="Weichselgartner M."/>
            <person name="de Simone V."/>
            <person name="Obermaier B."/>
            <person name="Mache R."/>
            <person name="Mueller M."/>
            <person name="Kreis M."/>
            <person name="Delseny M."/>
            <person name="Puigdomenech P."/>
            <person name="Watson M."/>
            <person name="Schmidtheini T."/>
            <person name="Reichert B."/>
            <person name="Portetelle D."/>
            <person name="Perez-Alonso M."/>
            <person name="Boutry M."/>
            <person name="Bancroft I."/>
            <person name="Vos P."/>
            <person name="Hoheisel J."/>
            <person name="Zimmermann W."/>
            <person name="Wedler H."/>
            <person name="Ridley P."/>
            <person name="Langham S.-A."/>
            <person name="McCullagh B."/>
            <person name="Bilham L."/>
            <person name="Robben J."/>
            <person name="van der Schueren J."/>
            <person name="Grymonprez B."/>
            <person name="Chuang Y.-J."/>
            <person name="Vandenbussche F."/>
            <person name="Braeken M."/>
            <person name="Weltjens I."/>
            <person name="Voet M."/>
            <person name="Bastiaens I."/>
            <person name="Aert R."/>
            <person name="Defoor E."/>
            <person name="Weitzenegger T."/>
            <person name="Bothe G."/>
            <person name="Ramsperger U."/>
            <person name="Hilbert H."/>
            <person name="Braun M."/>
            <person name="Holzer E."/>
            <person name="Brandt A."/>
            <person name="Peters S."/>
            <person name="van Staveren M."/>
            <person name="Dirkse W."/>
            <person name="Mooijman P."/>
            <person name="Klein Lankhorst R."/>
            <person name="Rose M."/>
            <person name="Hauf J."/>
            <person name="Koetter P."/>
            <person name="Berneiser S."/>
            <person name="Hempel S."/>
            <person name="Feldpausch M."/>
            <person name="Lamberth S."/>
            <person name="Van den Daele H."/>
            <person name="De Keyser A."/>
            <person name="Buysshaert C."/>
            <person name="Gielen J."/>
            <person name="Villarroel R."/>
            <person name="De Clercq R."/>
            <person name="van Montagu M."/>
            <person name="Rogers J."/>
            <person name="Cronin A."/>
            <person name="Quail M.A."/>
            <person name="Bray-Allen S."/>
            <person name="Clark L."/>
            <person name="Doggett J."/>
            <person name="Hall S."/>
            <person name="Kay M."/>
            <person name="Lennard N."/>
            <person name="McLay K."/>
            <person name="Mayes R."/>
            <person name="Pettett A."/>
            <person name="Rajandream M.A."/>
            <person name="Lyne M."/>
            <person name="Benes V."/>
            <person name="Rechmann S."/>
            <person name="Borkova D."/>
            <person name="Bloecker H."/>
            <person name="Scharfe M."/>
            <person name="Grimm M."/>
            <person name="Loehnert T.-H."/>
            <person name="Dose S."/>
            <person name="de Haan M."/>
            <person name="Maarse A.C."/>
            <person name="Schaefer M."/>
            <person name="Mueller-Auer S."/>
            <person name="Gabel C."/>
            <person name="Fuchs M."/>
            <person name="Fartmann B."/>
            <person name="Granderath K."/>
            <person name="Dauner D."/>
            <person name="Herzl A."/>
            <person name="Neumann S."/>
            <person name="Argiriou A."/>
            <person name="Vitale D."/>
            <person name="Liguori R."/>
            <person name="Piravandi E."/>
            <person name="Massenet O."/>
            <person name="Quigley F."/>
            <person name="Clabauld G."/>
            <person name="Muendlein A."/>
            <person name="Felber R."/>
            <person name="Schnabl S."/>
            <person name="Hiller R."/>
            <person name="Schmidt W."/>
            <person name="Lecharny A."/>
            <person name="Aubourg S."/>
            <person name="Chefdor F."/>
            <person name="Cooke R."/>
            <person name="Berger C."/>
            <person name="Monfort A."/>
            <person name="Casacuberta E."/>
            <person name="Gibbons T."/>
            <person name="Weber N."/>
            <person name="Vandenbol M."/>
            <person name="Bargues M."/>
            <person name="Terol J."/>
            <person name="Torres A."/>
            <person name="Perez-Perez A."/>
            <person name="Purnelle B."/>
            <person name="Bent E."/>
            <person name="Johnson S."/>
            <person name="Tacon D."/>
            <person name="Jesse T."/>
            <person name="Heijnen L."/>
            <person name="Schwarz S."/>
            <person name="Scholler P."/>
            <person name="Heber S."/>
            <person name="Francs P."/>
            <person name="Bielke C."/>
            <person name="Frishman D."/>
            <person name="Haase D."/>
            <person name="Lemcke K."/>
            <person name="Mewes H.-W."/>
            <person name="Stocker S."/>
            <person name="Zaccaria P."/>
            <person name="Bevan M."/>
            <person name="Wilson R.K."/>
            <person name="de la Bastide M."/>
            <person name="Habermann K."/>
            <person name="Parnell L."/>
            <person name="Dedhia N."/>
            <person name="Gnoj L."/>
            <person name="Schutz K."/>
            <person name="Huang E."/>
            <person name="Spiegel L."/>
            <person name="Sekhon M."/>
            <person name="Murray J."/>
            <person name="Sheet P."/>
            <person name="Cordes M."/>
            <person name="Abu-Threideh J."/>
            <person name="Stoneking T."/>
            <person name="Kalicki J."/>
            <person name="Graves T."/>
            <person name="Harmon G."/>
            <person name="Edwards J."/>
            <person name="Latreille P."/>
            <person name="Courtney L."/>
            <person name="Cloud J."/>
            <person name="Abbott A."/>
            <person name="Scott K."/>
            <person name="Johnson D."/>
            <person name="Minx P."/>
            <person name="Bentley D."/>
            <person name="Fulton B."/>
            <person name="Miller N."/>
            <person name="Greco T."/>
            <person name="Kemp K."/>
            <person name="Kramer J."/>
            <person name="Fulton L."/>
            <person name="Mardis E."/>
            <person name="Dante M."/>
            <person name="Pepin K."/>
            <person name="Hillier L.W."/>
            <person name="Nelson J."/>
            <person name="Spieth J."/>
            <person name="Ryan E."/>
            <person name="Andrews S."/>
            <person name="Geisel C."/>
            <person name="Layman D."/>
            <person name="Du H."/>
            <person name="Ali J."/>
            <person name="Berghoff A."/>
            <person name="Jones K."/>
            <person name="Drone K."/>
            <person name="Cotton M."/>
            <person name="Joshu C."/>
            <person name="Antonoiu B."/>
            <person name="Zidanic M."/>
            <person name="Strong C."/>
            <person name="Sun H."/>
            <person name="Lamar B."/>
            <person name="Yordan C."/>
            <person name="Ma P."/>
            <person name="Zhong J."/>
            <person name="Preston R."/>
            <person name="Vil D."/>
            <person name="Shekher M."/>
            <person name="Matero A."/>
            <person name="Shah R."/>
            <person name="Swaby I.K."/>
            <person name="O'Shaughnessy A."/>
            <person name="Rodriguez M."/>
            <person name="Hoffman J."/>
            <person name="Till S."/>
            <person name="Granat S."/>
            <person name="Shohdy N."/>
            <person name="Hasegawa A."/>
            <person name="Hameed A."/>
            <person name="Lodhi M."/>
            <person name="Johnson A."/>
            <person name="Chen E."/>
            <person name="Marra M.A."/>
            <person name="Martienssen R."/>
            <person name="McCombie W.R."/>
        </authorList>
    </citation>
    <scope>NUCLEOTIDE SEQUENCE [LARGE SCALE GENOMIC DNA]</scope>
    <source>
        <strain>cv. Columbia</strain>
    </source>
</reference>
<reference key="4">
    <citation type="journal article" date="2017" name="Plant J.">
        <title>Araport11: a complete reannotation of the Arabidopsis thaliana reference genome.</title>
        <authorList>
            <person name="Cheng C.Y."/>
            <person name="Krishnakumar V."/>
            <person name="Chan A.P."/>
            <person name="Thibaud-Nissen F."/>
            <person name="Schobel S."/>
            <person name="Town C.D."/>
        </authorList>
    </citation>
    <scope>GENOME REANNOTATION</scope>
    <source>
        <strain>cv. Columbia</strain>
    </source>
</reference>
<reference key="5">
    <citation type="journal article" date="2003" name="Science">
        <title>Empirical analysis of transcriptional activity in the Arabidopsis genome.</title>
        <authorList>
            <person name="Yamada K."/>
            <person name="Lim J."/>
            <person name="Dale J.M."/>
            <person name="Chen H."/>
            <person name="Shinn P."/>
            <person name="Palm C.J."/>
            <person name="Southwick A.M."/>
            <person name="Wu H.C."/>
            <person name="Kim C.J."/>
            <person name="Nguyen M."/>
            <person name="Pham P.K."/>
            <person name="Cheuk R.F."/>
            <person name="Karlin-Newmann G."/>
            <person name="Liu S.X."/>
            <person name="Lam B."/>
            <person name="Sakano H."/>
            <person name="Wu T."/>
            <person name="Yu G."/>
            <person name="Miranda M."/>
            <person name="Quach H.L."/>
            <person name="Tripp M."/>
            <person name="Chang C.H."/>
            <person name="Lee J.M."/>
            <person name="Toriumi M.J."/>
            <person name="Chan M.M."/>
            <person name="Tang C.C."/>
            <person name="Onodera C.S."/>
            <person name="Deng J.M."/>
            <person name="Akiyama K."/>
            <person name="Ansari Y."/>
            <person name="Arakawa T."/>
            <person name="Banh J."/>
            <person name="Banno F."/>
            <person name="Bowser L."/>
            <person name="Brooks S.Y."/>
            <person name="Carninci P."/>
            <person name="Chao Q."/>
            <person name="Choy N."/>
            <person name="Enju A."/>
            <person name="Goldsmith A.D."/>
            <person name="Gurjal M."/>
            <person name="Hansen N.F."/>
            <person name="Hayashizaki Y."/>
            <person name="Johnson-Hopson C."/>
            <person name="Hsuan V.W."/>
            <person name="Iida K."/>
            <person name="Karnes M."/>
            <person name="Khan S."/>
            <person name="Koesema E."/>
            <person name="Ishida J."/>
            <person name="Jiang P.X."/>
            <person name="Jones T."/>
            <person name="Kawai J."/>
            <person name="Kamiya A."/>
            <person name="Meyers C."/>
            <person name="Nakajima M."/>
            <person name="Narusaka M."/>
            <person name="Seki M."/>
            <person name="Sakurai T."/>
            <person name="Satou M."/>
            <person name="Tamse R."/>
            <person name="Vaysberg M."/>
            <person name="Wallender E.K."/>
            <person name="Wong C."/>
            <person name="Yamamura Y."/>
            <person name="Yuan S."/>
            <person name="Shinozaki K."/>
            <person name="Davis R.W."/>
            <person name="Theologis A."/>
            <person name="Ecker J.R."/>
        </authorList>
    </citation>
    <scope>NUCLEOTIDE SEQUENCE [LARGE SCALE MRNA]</scope>
    <source>
        <strain>cv. Columbia</strain>
    </source>
</reference>
<reference key="6">
    <citation type="submission" date="2002-03" db="EMBL/GenBank/DDBJ databases">
        <title>Full-length cDNA from Arabidopsis thaliana.</title>
        <authorList>
            <person name="Brover V.V."/>
            <person name="Troukhan M.E."/>
            <person name="Alexandrov N.A."/>
            <person name="Lu Y.-P."/>
            <person name="Flavell R.B."/>
            <person name="Feldmann K.A."/>
        </authorList>
    </citation>
    <scope>NUCLEOTIDE SEQUENCE [LARGE SCALE MRNA]</scope>
</reference>
<reference key="7">
    <citation type="journal article" date="2004" name="FEBS Lett.">
        <title>Arabidopsis homologues of the autophagy protein Atg8 are a novel family of microtubule binding proteins.</title>
        <authorList>
            <person name="Ketelaar T."/>
            <person name="Voss C."/>
            <person name="Dimmock S.A."/>
            <person name="Thumm M."/>
            <person name="Hussey P.J."/>
        </authorList>
    </citation>
    <scope>INTERACTION WITH ATG4B</scope>
    <scope>BINDING TO MICROTUBULES</scope>
</reference>
<reference key="8">
    <citation type="journal article" date="2004" name="Plant Cell">
        <title>Processing of ATG8s, ubiquitin-like proteins, and their deconjugation by ATG4s are essential for plant autophagy.</title>
        <authorList>
            <person name="Yoshimoto K."/>
            <person name="Hanaoka H."/>
            <person name="Sato S."/>
            <person name="Kato T."/>
            <person name="Tabata S."/>
            <person name="Noda T."/>
            <person name="Ohsumi Y."/>
        </authorList>
    </citation>
    <scope>TISSUE SPECIFICITY</scope>
</reference>
<reference key="9">
    <citation type="journal article" date="2005" name="J. Exp. Bot.">
        <title>The autophagy-associated Atg8 gene family operates both under favourable growth conditions and under starvation stresses in Arabidopsis plants.</title>
        <authorList>
            <person name="Slavikova S."/>
            <person name="Shy G."/>
            <person name="Yao Y."/>
            <person name="Glozman R."/>
            <person name="Levanony H."/>
            <person name="Pietrokovski S."/>
            <person name="Elazar Z."/>
            <person name="Galili G."/>
        </authorList>
    </citation>
    <scope>INDUCTION</scope>
</reference>
<reference key="10">
    <citation type="journal article" date="2011" name="Autophagy">
        <title>Plant NBR1 is a selective autophagy substrate and a functional hybrid of the mammalian autophagic adapters NBR1 and p62/SQSTM1.</title>
        <authorList>
            <person name="Svenning S."/>
            <person name="Lamark T."/>
            <person name="Krause K."/>
            <person name="Johansen T."/>
        </authorList>
    </citation>
    <scope>INTERACTION WITH NBR1</scope>
</reference>
<organism>
    <name type="scientific">Arabidopsis thaliana</name>
    <name type="common">Mouse-ear cress</name>
    <dbReference type="NCBI Taxonomy" id="3702"/>
    <lineage>
        <taxon>Eukaryota</taxon>
        <taxon>Viridiplantae</taxon>
        <taxon>Streptophyta</taxon>
        <taxon>Embryophyta</taxon>
        <taxon>Tracheophyta</taxon>
        <taxon>Spermatophyta</taxon>
        <taxon>Magnoliopsida</taxon>
        <taxon>eudicotyledons</taxon>
        <taxon>Gunneridae</taxon>
        <taxon>Pentapetalae</taxon>
        <taxon>rosids</taxon>
        <taxon>malvids</taxon>
        <taxon>Brassicales</taxon>
        <taxon>Brassicaceae</taxon>
        <taxon>Camelineae</taxon>
        <taxon>Arabidopsis</taxon>
    </lineage>
</organism>
<proteinExistence type="evidence at protein level"/>
<name>ATG8A_ARATH</name>
<keyword id="KW-0025">Alternative splicing</keyword>
<keyword id="KW-0072">Autophagy</keyword>
<keyword id="KW-0963">Cytoplasm</keyword>
<keyword id="KW-0968">Cytoplasmic vesicle</keyword>
<keyword id="KW-0206">Cytoskeleton</keyword>
<keyword id="KW-0449">Lipoprotein</keyword>
<keyword id="KW-0472">Membrane</keyword>
<keyword id="KW-0493">Microtubule</keyword>
<keyword id="KW-0653">Protein transport</keyword>
<keyword id="KW-1185">Reference proteome</keyword>
<keyword id="KW-0813">Transport</keyword>
<keyword id="KW-0833">Ubl conjugation pathway</keyword>
<keyword id="KW-0926">Vacuole</keyword>
<protein>
    <recommendedName>
        <fullName>Autophagy-related protein 8a</fullName>
    </recommendedName>
    <alternativeName>
        <fullName>Autophagy-related ubiquitin-like modifier ATG8a</fullName>
        <shortName>AtAPG8a</shortName>
        <shortName>Protein autophagy 8a</shortName>
    </alternativeName>
</protein>
<evidence type="ECO:0000250" key="1">
    <source>
        <dbReference type="UniProtKB" id="P38182"/>
    </source>
</evidence>
<evidence type="ECO:0000250" key="2">
    <source>
        <dbReference type="UniProtKB" id="Q2XPP5"/>
    </source>
</evidence>
<evidence type="ECO:0000256" key="3">
    <source>
        <dbReference type="SAM" id="MobiDB-lite"/>
    </source>
</evidence>
<evidence type="ECO:0000269" key="4">
    <source>
    </source>
</evidence>
<evidence type="ECO:0000269" key="5">
    <source>
    </source>
</evidence>
<evidence type="ECO:0000269" key="6">
    <source>
    </source>
</evidence>
<evidence type="ECO:0000269" key="7">
    <source>
    </source>
</evidence>
<evidence type="ECO:0000305" key="8"/>
<comment type="function">
    <text evidence="1">Ubiquitin-like modifier involved in autophagosomes formation. May mediate the delivery of the autophagosomes to the vacuole via the microtubule cytoskeleton.</text>
</comment>
<comment type="subunit">
    <text evidence="4 7">Interacts with ATG4B (PubMed:15178341). Interacts with NBR1 (PubMed:21606687).</text>
</comment>
<comment type="subcellular location">
    <subcellularLocation>
        <location evidence="1">Cytoplasmic vesicle</location>
        <location evidence="1">Autophagosome membrane</location>
        <topology evidence="1">Lipid-anchor</topology>
    </subcellularLocation>
    <subcellularLocation>
        <location evidence="1">Vacuole membrane</location>
        <topology evidence="1">Lipid-anchor</topology>
    </subcellularLocation>
    <subcellularLocation>
        <location evidence="4">Cytoplasm</location>
        <location evidence="4">Cytoskeleton</location>
    </subcellularLocation>
</comment>
<comment type="alternative products">
    <event type="alternative splicing"/>
    <isoform>
        <id>Q8LEM4-1</id>
        <name>1</name>
        <sequence type="displayed"/>
    </isoform>
    <text>A number of isoforms are produced. According to EST sequences.</text>
</comment>
<comment type="tissue specificity">
    <text evidence="5">Constitutively expressed.</text>
</comment>
<comment type="induction">
    <text evidence="6">Induced by sugar starvation.</text>
</comment>
<comment type="PTM">
    <text evidence="1">The C-terminal 5 residues are removed by ATG4 to expose Gly-117 at the C-terminus. This Gly-117 forms then a thioester bond with the 'Cys-558' of ATG7 (E1-like activating enzyme) before being transferred to the 'Cys-258' of ATG3 (the specific E2 conjugating enzyme), in order to be finally amidated with phosphatidylethanolamine. This lipid modification anchors ATG8 to autophagosomes.</text>
</comment>
<comment type="similarity">
    <text evidence="8">Belongs to the ATG8 family.</text>
</comment>
<comment type="sequence caution" evidence="8">
    <conflict type="erroneous gene model prediction">
        <sequence resource="EMBL-CDS" id="CAA18101"/>
    </conflict>
</comment>
<comment type="sequence caution" evidence="8">
    <conflict type="erroneous gene model prediction">
        <sequence resource="EMBL-CDS" id="CAB79153"/>
    </conflict>
</comment>
<accession>Q8LEM4</accession>
<accession>O65447</accession>
<accession>Q8S928</accession>
<feature type="chain" id="PRO_0000286905" description="Autophagy-related protein 8a">
    <location>
        <begin position="1"/>
        <end position="117"/>
    </location>
</feature>
<feature type="propeptide" id="PRO_0000286906" description="Removed in mature form" evidence="2">
    <location>
        <begin position="118"/>
        <end position="122"/>
    </location>
</feature>
<feature type="region of interest" description="Disordered" evidence="3">
    <location>
        <begin position="1"/>
        <end position="21"/>
    </location>
</feature>
<feature type="site" description="Cleavage; by ATG4" evidence="2">
    <location>
        <begin position="117"/>
        <end position="118"/>
    </location>
</feature>
<feature type="lipid moiety-binding region" description="Phosphatidylethanolamine amidated glycine" evidence="1">
    <location>
        <position position="117"/>
    </location>
</feature>